<reference key="1">
    <citation type="journal article" date="2005" name="Science">
        <title>The transcriptional landscape of the mammalian genome.</title>
        <authorList>
            <person name="Carninci P."/>
            <person name="Kasukawa T."/>
            <person name="Katayama S."/>
            <person name="Gough J."/>
            <person name="Frith M.C."/>
            <person name="Maeda N."/>
            <person name="Oyama R."/>
            <person name="Ravasi T."/>
            <person name="Lenhard B."/>
            <person name="Wells C."/>
            <person name="Kodzius R."/>
            <person name="Shimokawa K."/>
            <person name="Bajic V.B."/>
            <person name="Brenner S.E."/>
            <person name="Batalov S."/>
            <person name="Forrest A.R."/>
            <person name="Zavolan M."/>
            <person name="Davis M.J."/>
            <person name="Wilming L.G."/>
            <person name="Aidinis V."/>
            <person name="Allen J.E."/>
            <person name="Ambesi-Impiombato A."/>
            <person name="Apweiler R."/>
            <person name="Aturaliya R.N."/>
            <person name="Bailey T.L."/>
            <person name="Bansal M."/>
            <person name="Baxter L."/>
            <person name="Beisel K.W."/>
            <person name="Bersano T."/>
            <person name="Bono H."/>
            <person name="Chalk A.M."/>
            <person name="Chiu K.P."/>
            <person name="Choudhary V."/>
            <person name="Christoffels A."/>
            <person name="Clutterbuck D.R."/>
            <person name="Crowe M.L."/>
            <person name="Dalla E."/>
            <person name="Dalrymple B.P."/>
            <person name="de Bono B."/>
            <person name="Della Gatta G."/>
            <person name="di Bernardo D."/>
            <person name="Down T."/>
            <person name="Engstrom P."/>
            <person name="Fagiolini M."/>
            <person name="Faulkner G."/>
            <person name="Fletcher C.F."/>
            <person name="Fukushima T."/>
            <person name="Furuno M."/>
            <person name="Futaki S."/>
            <person name="Gariboldi M."/>
            <person name="Georgii-Hemming P."/>
            <person name="Gingeras T.R."/>
            <person name="Gojobori T."/>
            <person name="Green R.E."/>
            <person name="Gustincich S."/>
            <person name="Harbers M."/>
            <person name="Hayashi Y."/>
            <person name="Hensch T.K."/>
            <person name="Hirokawa N."/>
            <person name="Hill D."/>
            <person name="Huminiecki L."/>
            <person name="Iacono M."/>
            <person name="Ikeo K."/>
            <person name="Iwama A."/>
            <person name="Ishikawa T."/>
            <person name="Jakt M."/>
            <person name="Kanapin A."/>
            <person name="Katoh M."/>
            <person name="Kawasawa Y."/>
            <person name="Kelso J."/>
            <person name="Kitamura H."/>
            <person name="Kitano H."/>
            <person name="Kollias G."/>
            <person name="Krishnan S.P."/>
            <person name="Kruger A."/>
            <person name="Kummerfeld S.K."/>
            <person name="Kurochkin I.V."/>
            <person name="Lareau L.F."/>
            <person name="Lazarevic D."/>
            <person name="Lipovich L."/>
            <person name="Liu J."/>
            <person name="Liuni S."/>
            <person name="McWilliam S."/>
            <person name="Madan Babu M."/>
            <person name="Madera M."/>
            <person name="Marchionni L."/>
            <person name="Matsuda H."/>
            <person name="Matsuzawa S."/>
            <person name="Miki H."/>
            <person name="Mignone F."/>
            <person name="Miyake S."/>
            <person name="Morris K."/>
            <person name="Mottagui-Tabar S."/>
            <person name="Mulder N."/>
            <person name="Nakano N."/>
            <person name="Nakauchi H."/>
            <person name="Ng P."/>
            <person name="Nilsson R."/>
            <person name="Nishiguchi S."/>
            <person name="Nishikawa S."/>
            <person name="Nori F."/>
            <person name="Ohara O."/>
            <person name="Okazaki Y."/>
            <person name="Orlando V."/>
            <person name="Pang K.C."/>
            <person name="Pavan W.J."/>
            <person name="Pavesi G."/>
            <person name="Pesole G."/>
            <person name="Petrovsky N."/>
            <person name="Piazza S."/>
            <person name="Reed J."/>
            <person name="Reid J.F."/>
            <person name="Ring B.Z."/>
            <person name="Ringwald M."/>
            <person name="Rost B."/>
            <person name="Ruan Y."/>
            <person name="Salzberg S.L."/>
            <person name="Sandelin A."/>
            <person name="Schneider C."/>
            <person name="Schoenbach C."/>
            <person name="Sekiguchi K."/>
            <person name="Semple C.A."/>
            <person name="Seno S."/>
            <person name="Sessa L."/>
            <person name="Sheng Y."/>
            <person name="Shibata Y."/>
            <person name="Shimada H."/>
            <person name="Shimada K."/>
            <person name="Silva D."/>
            <person name="Sinclair B."/>
            <person name="Sperling S."/>
            <person name="Stupka E."/>
            <person name="Sugiura K."/>
            <person name="Sultana R."/>
            <person name="Takenaka Y."/>
            <person name="Taki K."/>
            <person name="Tammoja K."/>
            <person name="Tan S.L."/>
            <person name="Tang S."/>
            <person name="Taylor M.S."/>
            <person name="Tegner J."/>
            <person name="Teichmann S.A."/>
            <person name="Ueda H.R."/>
            <person name="van Nimwegen E."/>
            <person name="Verardo R."/>
            <person name="Wei C.L."/>
            <person name="Yagi K."/>
            <person name="Yamanishi H."/>
            <person name="Zabarovsky E."/>
            <person name="Zhu S."/>
            <person name="Zimmer A."/>
            <person name="Hide W."/>
            <person name="Bult C."/>
            <person name="Grimmond S.M."/>
            <person name="Teasdale R.D."/>
            <person name="Liu E.T."/>
            <person name="Brusic V."/>
            <person name="Quackenbush J."/>
            <person name="Wahlestedt C."/>
            <person name="Mattick J.S."/>
            <person name="Hume D.A."/>
            <person name="Kai C."/>
            <person name="Sasaki D."/>
            <person name="Tomaru Y."/>
            <person name="Fukuda S."/>
            <person name="Kanamori-Katayama M."/>
            <person name="Suzuki M."/>
            <person name="Aoki J."/>
            <person name="Arakawa T."/>
            <person name="Iida J."/>
            <person name="Imamura K."/>
            <person name="Itoh M."/>
            <person name="Kato T."/>
            <person name="Kawaji H."/>
            <person name="Kawagashira N."/>
            <person name="Kawashima T."/>
            <person name="Kojima M."/>
            <person name="Kondo S."/>
            <person name="Konno H."/>
            <person name="Nakano K."/>
            <person name="Ninomiya N."/>
            <person name="Nishio T."/>
            <person name="Okada M."/>
            <person name="Plessy C."/>
            <person name="Shibata K."/>
            <person name="Shiraki T."/>
            <person name="Suzuki S."/>
            <person name="Tagami M."/>
            <person name="Waki K."/>
            <person name="Watahiki A."/>
            <person name="Okamura-Oho Y."/>
            <person name="Suzuki H."/>
            <person name="Kawai J."/>
            <person name="Hayashizaki Y."/>
        </authorList>
    </citation>
    <scope>NUCLEOTIDE SEQUENCE [LARGE SCALE MRNA] (ISOFORMS 1 AND 2)</scope>
    <source>
        <strain>C57BL/6J</strain>
        <tissue>Testis</tissue>
    </source>
</reference>
<reference key="2">
    <citation type="submission" date="2007-08" db="EMBL/GenBank/DDBJ databases">
        <authorList>
            <person name="Mural R.J."/>
            <person name="Adams M.D."/>
            <person name="Myers E.W."/>
            <person name="Smith H.O."/>
            <person name="Venter J.C."/>
        </authorList>
    </citation>
    <scope>NUCLEOTIDE SEQUENCE [LARGE SCALE GENOMIC DNA]</scope>
</reference>
<reference key="3">
    <citation type="journal article" date="2004" name="Genome Res.">
        <title>The status, quality, and expansion of the NIH full-length cDNA project: the Mammalian Gene Collection (MGC).</title>
        <authorList>
            <consortium name="The MGC Project Team"/>
        </authorList>
    </citation>
    <scope>NUCLEOTIDE SEQUENCE [LARGE SCALE MRNA] (ISOFORM 1)</scope>
    <source>
        <tissue>Embryo</tissue>
    </source>
</reference>
<name>F228A_MOUSE</name>
<protein>
    <recommendedName>
        <fullName>Protein FAM228A</fullName>
    </recommendedName>
</protein>
<evidence type="ECO:0000250" key="1">
    <source>
        <dbReference type="UniProtKB" id="Q5XIN5"/>
    </source>
</evidence>
<evidence type="ECO:0000256" key="2">
    <source>
        <dbReference type="SAM" id="MobiDB-lite"/>
    </source>
</evidence>
<evidence type="ECO:0000303" key="3">
    <source>
    </source>
</evidence>
<evidence type="ECO:0000305" key="4"/>
<sequence length="299" mass="34457">MADTKTSKCDEHFSVEKLKEWPEPESVSLMELLAREDIDEAVHAVLFRENYVVKRLDTYLQHLAVFKERRKEMLHKKWVENVVQPLQQRITDKITSYRRPGKNQVKYEHCLKQTNKPTKVSSSCLFQKQQEFREAKGTSYQHGRGKTHDTQKEAKETEKGLSFTPFSLRPHCSSPRERQRASARLMQSKPGGRNRYKGASSEKPVFTLKSHLPKEEKTVSRSQLVFERQFRASRLSQDIKEAEKKGLVVGTGPQRPRSWAAADSVPRPSLVGRRVMTAEILGEHLVSLHQAARSGLQWP</sequence>
<organism>
    <name type="scientific">Mus musculus</name>
    <name type="common">Mouse</name>
    <dbReference type="NCBI Taxonomy" id="10090"/>
    <lineage>
        <taxon>Eukaryota</taxon>
        <taxon>Metazoa</taxon>
        <taxon>Chordata</taxon>
        <taxon>Craniata</taxon>
        <taxon>Vertebrata</taxon>
        <taxon>Euteleostomi</taxon>
        <taxon>Mammalia</taxon>
        <taxon>Eutheria</taxon>
        <taxon>Euarchontoglires</taxon>
        <taxon>Glires</taxon>
        <taxon>Rodentia</taxon>
        <taxon>Myomorpha</taxon>
        <taxon>Muroidea</taxon>
        <taxon>Muridae</taxon>
        <taxon>Murinae</taxon>
        <taxon>Mus</taxon>
        <taxon>Mus</taxon>
    </lineage>
</organism>
<gene>
    <name type="primary">Fam228a</name>
</gene>
<feature type="chain" id="PRO_0000348446" description="Protein FAM228A">
    <location>
        <begin position="1"/>
        <end position="299"/>
    </location>
</feature>
<feature type="region of interest" description="Disordered" evidence="2">
    <location>
        <begin position="135"/>
        <end position="201"/>
    </location>
</feature>
<feature type="compositionally biased region" description="Basic and acidic residues" evidence="2">
    <location>
        <begin position="146"/>
        <end position="159"/>
    </location>
</feature>
<feature type="modified residue" description="Phosphoserine" evidence="1">
    <location>
        <position position="264"/>
    </location>
</feature>
<feature type="splice variant" id="VSP_035162" description="In isoform 2." evidence="3">
    <original>KTHDTQKEAKETEKGLSFTPFSLRPHC</original>
    <variation>ALQPTRGCIEDTAKCQIVPPQEPQTCF</variation>
    <location>
        <begin position="146"/>
        <end position="172"/>
    </location>
</feature>
<feature type="splice variant" id="VSP_035163" description="In isoform 2." evidence="3">
    <location>
        <begin position="173"/>
        <end position="299"/>
    </location>
</feature>
<accession>Q8CDW1</accession>
<accession>Q9D5M5</accession>
<keyword id="KW-0025">Alternative splicing</keyword>
<keyword id="KW-0597">Phosphoprotein</keyword>
<keyword id="KW-1185">Reference proteome</keyword>
<dbReference type="EMBL" id="AK015158">
    <property type="protein sequence ID" value="BAB29728.1"/>
    <property type="molecule type" value="mRNA"/>
</dbReference>
<dbReference type="EMBL" id="AK029492">
    <property type="protein sequence ID" value="BAC26475.1"/>
    <property type="molecule type" value="mRNA"/>
</dbReference>
<dbReference type="EMBL" id="CH466623">
    <property type="protein sequence ID" value="EDL01360.1"/>
    <property type="molecule type" value="Genomic_DNA"/>
</dbReference>
<dbReference type="EMBL" id="BC138846">
    <property type="protein sequence ID" value="AAI38847.1"/>
    <property type="molecule type" value="mRNA"/>
</dbReference>
<dbReference type="EMBL" id="BC138853">
    <property type="protein sequence ID" value="AAI38854.1"/>
    <property type="molecule type" value="mRNA"/>
</dbReference>
<dbReference type="CCDS" id="CCDS49018.1">
    <molecule id="Q8CDW1-1"/>
</dbReference>
<dbReference type="RefSeq" id="NP_083383.1">
    <molecule id="Q8CDW1-1"/>
    <property type="nucleotide sequence ID" value="NM_029107.3"/>
</dbReference>
<dbReference type="RefSeq" id="XP_017170714.1">
    <property type="nucleotide sequence ID" value="XM_017315225.1"/>
</dbReference>
<dbReference type="RefSeq" id="XP_036013528.1">
    <molecule id="Q8CDW1-1"/>
    <property type="nucleotide sequence ID" value="XM_036157635.1"/>
</dbReference>
<dbReference type="SMR" id="Q8CDW1"/>
<dbReference type="FunCoup" id="Q8CDW1">
    <property type="interactions" value="16"/>
</dbReference>
<dbReference type="iPTMnet" id="Q8CDW1"/>
<dbReference type="PhosphoSitePlus" id="Q8CDW1"/>
<dbReference type="PaxDb" id="10090-ENSMUSP00000106784"/>
<dbReference type="Antibodypedia" id="51135">
    <property type="antibodies" value="6 antibodies from 5 providers"/>
</dbReference>
<dbReference type="DNASU" id="74855"/>
<dbReference type="Ensembl" id="ENSMUST00000111154.4">
    <molecule id="Q8CDW1-1"/>
    <property type="protein sequence ID" value="ENSMUSP00000106784.3"/>
    <property type="gene ID" value="ENSMUSG00000079177.5"/>
</dbReference>
<dbReference type="Ensembl" id="ENSMUST00000222363.2">
    <molecule id="Q8CDW1-1"/>
    <property type="protein sequence ID" value="ENSMUSP00000152506.2"/>
    <property type="gene ID" value="ENSMUSG00000079177.5"/>
</dbReference>
<dbReference type="GeneID" id="74855"/>
<dbReference type="KEGG" id="mmu:74855"/>
<dbReference type="UCSC" id="uc007myb.1">
    <molecule id="Q8CDW1-1"/>
    <property type="organism name" value="mouse"/>
</dbReference>
<dbReference type="UCSC" id="uc007myc.1">
    <molecule id="Q8CDW1-2"/>
    <property type="organism name" value="mouse"/>
</dbReference>
<dbReference type="AGR" id="MGI:1922105"/>
<dbReference type="CTD" id="653140"/>
<dbReference type="MGI" id="MGI:1922105">
    <property type="gene designation" value="Fam228a"/>
</dbReference>
<dbReference type="VEuPathDB" id="HostDB:ENSMUSG00000079177"/>
<dbReference type="eggNOG" id="ENOG502RU0D">
    <property type="taxonomic scope" value="Eukaryota"/>
</dbReference>
<dbReference type="GeneTree" id="ENSGT00530000064185"/>
<dbReference type="HOGENOM" id="CLU_079089_0_0_1"/>
<dbReference type="InParanoid" id="Q8CDW1"/>
<dbReference type="OrthoDB" id="9905773at2759"/>
<dbReference type="PhylomeDB" id="Q8CDW1"/>
<dbReference type="TreeFam" id="TF336288"/>
<dbReference type="BioGRID-ORCS" id="74855">
    <property type="hits" value="1 hit in 76 CRISPR screens"/>
</dbReference>
<dbReference type="ChiTaRS" id="Fam228a">
    <property type="organism name" value="mouse"/>
</dbReference>
<dbReference type="PRO" id="PR:Q8CDW1"/>
<dbReference type="Proteomes" id="UP000000589">
    <property type="component" value="Chromosome 12"/>
</dbReference>
<dbReference type="RNAct" id="Q8CDW1">
    <property type="molecule type" value="protein"/>
</dbReference>
<dbReference type="Bgee" id="ENSMUSG00000079177">
    <property type="expression patterns" value="Expressed in spermatocyte and 28 other cell types or tissues"/>
</dbReference>
<dbReference type="ExpressionAtlas" id="Q8CDW1">
    <property type="expression patterns" value="baseline and differential"/>
</dbReference>
<dbReference type="InterPro" id="IPR040046">
    <property type="entry name" value="FAM228"/>
</dbReference>
<dbReference type="PANTHER" id="PTHR28584">
    <property type="entry name" value="FAMILY WITH SEQUENCE SIMILARITY 228 MEMBER A"/>
    <property type="match status" value="1"/>
</dbReference>
<dbReference type="PANTHER" id="PTHR28584:SF2">
    <property type="entry name" value="PROTEIN FAM228A"/>
    <property type="match status" value="1"/>
</dbReference>
<proteinExistence type="evidence at transcript level"/>
<comment type="alternative products">
    <event type="alternative splicing"/>
    <isoform>
        <id>Q8CDW1-1</id>
        <name>1</name>
        <sequence type="displayed"/>
    </isoform>
    <isoform>
        <id>Q8CDW1-2</id>
        <name>2</name>
        <sequence type="described" ref="VSP_035162 VSP_035163"/>
    </isoform>
</comment>
<comment type="similarity">
    <text evidence="4">Belongs to the FAM228 family.</text>
</comment>